<proteinExistence type="inferred from homology"/>
<reference key="1">
    <citation type="submission" date="2008-02" db="EMBL/GenBank/DDBJ databases">
        <title>Complete sequence of Yersinia pseudotuberculosis YPIII.</title>
        <authorList>
            <consortium name="US DOE Joint Genome Institute"/>
            <person name="Copeland A."/>
            <person name="Lucas S."/>
            <person name="Lapidus A."/>
            <person name="Glavina del Rio T."/>
            <person name="Dalin E."/>
            <person name="Tice H."/>
            <person name="Bruce D."/>
            <person name="Goodwin L."/>
            <person name="Pitluck S."/>
            <person name="Munk A.C."/>
            <person name="Brettin T."/>
            <person name="Detter J.C."/>
            <person name="Han C."/>
            <person name="Tapia R."/>
            <person name="Schmutz J."/>
            <person name="Larimer F."/>
            <person name="Land M."/>
            <person name="Hauser L."/>
            <person name="Challacombe J.F."/>
            <person name="Green L."/>
            <person name="Lindler L.E."/>
            <person name="Nikolich M.P."/>
            <person name="Richardson P."/>
        </authorList>
    </citation>
    <scope>NUCLEOTIDE SEQUENCE [LARGE SCALE GENOMIC DNA]</scope>
    <source>
        <strain>YPIII</strain>
    </source>
</reference>
<feature type="chain" id="PRO_1000091278" description="UPF0102 protein YPK_0538">
    <location>
        <begin position="1"/>
        <end position="117"/>
    </location>
</feature>
<evidence type="ECO:0000255" key="1">
    <source>
        <dbReference type="HAMAP-Rule" id="MF_00048"/>
    </source>
</evidence>
<comment type="similarity">
    <text evidence="1">Belongs to the UPF0102 family.</text>
</comment>
<accession>B1JL80</accession>
<sequence>MSQRDTGAHYENLARRHLERAGLVFQAANVAFRGGEIDLIMRDGDAWVFVEVRFRRNDLFGGAAASITPRKQQRLHLAAAVWLAQRGASFATTSCRFDVVAITGNQLEWLPNAFNTD</sequence>
<name>Y538_YERPY</name>
<gene>
    <name type="ordered locus">YPK_0538</name>
</gene>
<protein>
    <recommendedName>
        <fullName evidence="1">UPF0102 protein YPK_0538</fullName>
    </recommendedName>
</protein>
<organism>
    <name type="scientific">Yersinia pseudotuberculosis serotype O:3 (strain YPIII)</name>
    <dbReference type="NCBI Taxonomy" id="502800"/>
    <lineage>
        <taxon>Bacteria</taxon>
        <taxon>Pseudomonadati</taxon>
        <taxon>Pseudomonadota</taxon>
        <taxon>Gammaproteobacteria</taxon>
        <taxon>Enterobacterales</taxon>
        <taxon>Yersiniaceae</taxon>
        <taxon>Yersinia</taxon>
    </lineage>
</organism>
<dbReference type="EMBL" id="CP000950">
    <property type="protein sequence ID" value="ACA66841.1"/>
    <property type="molecule type" value="Genomic_DNA"/>
</dbReference>
<dbReference type="RefSeq" id="WP_002210147.1">
    <property type="nucleotide sequence ID" value="NZ_CP009792.1"/>
</dbReference>
<dbReference type="SMR" id="B1JL80"/>
<dbReference type="KEGG" id="ypy:YPK_0538"/>
<dbReference type="PATRIC" id="fig|502800.11.peg.1150"/>
<dbReference type="GO" id="GO:0003676">
    <property type="term" value="F:nucleic acid binding"/>
    <property type="evidence" value="ECO:0007669"/>
    <property type="project" value="InterPro"/>
</dbReference>
<dbReference type="CDD" id="cd20736">
    <property type="entry name" value="PoNe_Nuclease"/>
    <property type="match status" value="1"/>
</dbReference>
<dbReference type="Gene3D" id="3.40.1350.10">
    <property type="match status" value="1"/>
</dbReference>
<dbReference type="HAMAP" id="MF_00048">
    <property type="entry name" value="UPF0102"/>
    <property type="match status" value="1"/>
</dbReference>
<dbReference type="InterPro" id="IPR011335">
    <property type="entry name" value="Restrct_endonuc-II-like"/>
</dbReference>
<dbReference type="InterPro" id="IPR011856">
    <property type="entry name" value="tRNA_endonuc-like_dom_sf"/>
</dbReference>
<dbReference type="InterPro" id="IPR003509">
    <property type="entry name" value="UPF0102_YraN-like"/>
</dbReference>
<dbReference type="NCBIfam" id="NF009150">
    <property type="entry name" value="PRK12497.1-3"/>
    <property type="match status" value="1"/>
</dbReference>
<dbReference type="NCBIfam" id="TIGR00252">
    <property type="entry name" value="YraN family protein"/>
    <property type="match status" value="1"/>
</dbReference>
<dbReference type="PANTHER" id="PTHR34039">
    <property type="entry name" value="UPF0102 PROTEIN YRAN"/>
    <property type="match status" value="1"/>
</dbReference>
<dbReference type="PANTHER" id="PTHR34039:SF1">
    <property type="entry name" value="UPF0102 PROTEIN YRAN"/>
    <property type="match status" value="1"/>
</dbReference>
<dbReference type="Pfam" id="PF02021">
    <property type="entry name" value="UPF0102"/>
    <property type="match status" value="1"/>
</dbReference>
<dbReference type="SUPFAM" id="SSF52980">
    <property type="entry name" value="Restriction endonuclease-like"/>
    <property type="match status" value="1"/>
</dbReference>